<evidence type="ECO:0000255" key="1">
    <source>
        <dbReference type="HAMAP-Rule" id="MF_00592"/>
    </source>
</evidence>
<name>DEOC_ENT38</name>
<comment type="function">
    <text evidence="1">Catalyzes a reversible aldol reaction between acetaldehyde and D-glyceraldehyde 3-phosphate to generate 2-deoxy-D-ribose 5-phosphate.</text>
</comment>
<comment type="catalytic activity">
    <reaction evidence="1">
        <text>2-deoxy-D-ribose 5-phosphate = D-glyceraldehyde 3-phosphate + acetaldehyde</text>
        <dbReference type="Rhea" id="RHEA:12821"/>
        <dbReference type="ChEBI" id="CHEBI:15343"/>
        <dbReference type="ChEBI" id="CHEBI:59776"/>
        <dbReference type="ChEBI" id="CHEBI:62877"/>
        <dbReference type="EC" id="4.1.2.4"/>
    </reaction>
</comment>
<comment type="pathway">
    <text evidence="1">Carbohydrate degradation; 2-deoxy-D-ribose 1-phosphate degradation; D-glyceraldehyde 3-phosphate and acetaldehyde from 2-deoxy-alpha-D-ribose 1-phosphate: step 2/2.</text>
</comment>
<comment type="subcellular location">
    <subcellularLocation>
        <location evidence="1">Cytoplasm</location>
    </subcellularLocation>
</comment>
<comment type="similarity">
    <text evidence="1">Belongs to the DeoC/FbaB aldolase family. DeoC type 2 subfamily.</text>
</comment>
<sequence length="259" mass="27572">MTDLTASSLRALKLMDLTTLNDDDTNEKVIALCHQAKTPVGNTAAVCIYPRFIPIARKTLNAQGTPDVRIATVTNFPHGNDDIEIALAETRAAIAYGADEVDVVFPYRALIAGNEQVGFDLVKACKDACAAANVLLKVIIETGELKEEALIRKASEISIKAGADFIKTSTGKVPVNATPESARIMMEVIRDMGVSKTVGFKPAGGVRTAEDAQQFLAIADDLFGADWADSRHYRFGASSLLASLLKTLGHGDGKSASAY</sequence>
<organism>
    <name type="scientific">Enterobacter sp. (strain 638)</name>
    <dbReference type="NCBI Taxonomy" id="399742"/>
    <lineage>
        <taxon>Bacteria</taxon>
        <taxon>Pseudomonadati</taxon>
        <taxon>Pseudomonadota</taxon>
        <taxon>Gammaproteobacteria</taxon>
        <taxon>Enterobacterales</taxon>
        <taxon>Enterobacteriaceae</taxon>
        <taxon>Enterobacter</taxon>
    </lineage>
</organism>
<protein>
    <recommendedName>
        <fullName evidence="1">Deoxyribose-phosphate aldolase</fullName>
        <shortName evidence="1">DERA</shortName>
        <ecNumber evidence="1">4.1.2.4</ecNumber>
    </recommendedName>
    <alternativeName>
        <fullName evidence="1">2-deoxy-D-ribose 5-phosphate aldolase</fullName>
    </alternativeName>
    <alternativeName>
        <fullName evidence="1">Phosphodeoxyriboaldolase</fullName>
        <shortName evidence="1">Deoxyriboaldolase</shortName>
    </alternativeName>
</protein>
<feature type="chain" id="PRO_1000072598" description="Deoxyribose-phosphate aldolase">
    <location>
        <begin position="1"/>
        <end position="259"/>
    </location>
</feature>
<feature type="active site" description="Proton donor/acceptor" evidence="1">
    <location>
        <position position="102"/>
    </location>
</feature>
<feature type="active site" description="Schiff-base intermediate with acetaldehyde" evidence="1">
    <location>
        <position position="167"/>
    </location>
</feature>
<feature type="active site" description="Proton donor/acceptor" evidence="1">
    <location>
        <position position="201"/>
    </location>
</feature>
<dbReference type="EC" id="4.1.2.4" evidence="1"/>
<dbReference type="EMBL" id="CP000653">
    <property type="protein sequence ID" value="ABP59228.1"/>
    <property type="molecule type" value="Genomic_DNA"/>
</dbReference>
<dbReference type="RefSeq" id="WP_012015951.1">
    <property type="nucleotide sequence ID" value="NC_009436.1"/>
</dbReference>
<dbReference type="SMR" id="A4W698"/>
<dbReference type="STRING" id="399742.Ent638_0541"/>
<dbReference type="KEGG" id="ent:Ent638_0541"/>
<dbReference type="eggNOG" id="COG0274">
    <property type="taxonomic scope" value="Bacteria"/>
</dbReference>
<dbReference type="HOGENOM" id="CLU_053595_3_1_6"/>
<dbReference type="UniPathway" id="UPA00002">
    <property type="reaction ID" value="UER00468"/>
</dbReference>
<dbReference type="Proteomes" id="UP000000230">
    <property type="component" value="Chromosome"/>
</dbReference>
<dbReference type="GO" id="GO:0005737">
    <property type="term" value="C:cytoplasm"/>
    <property type="evidence" value="ECO:0007669"/>
    <property type="project" value="UniProtKB-SubCell"/>
</dbReference>
<dbReference type="GO" id="GO:0004139">
    <property type="term" value="F:deoxyribose-phosphate aldolase activity"/>
    <property type="evidence" value="ECO:0007669"/>
    <property type="project" value="UniProtKB-UniRule"/>
</dbReference>
<dbReference type="GO" id="GO:0006018">
    <property type="term" value="P:2-deoxyribose 1-phosphate catabolic process"/>
    <property type="evidence" value="ECO:0007669"/>
    <property type="project" value="UniProtKB-UniRule"/>
</dbReference>
<dbReference type="GO" id="GO:0016052">
    <property type="term" value="P:carbohydrate catabolic process"/>
    <property type="evidence" value="ECO:0007669"/>
    <property type="project" value="TreeGrafter"/>
</dbReference>
<dbReference type="GO" id="GO:0009264">
    <property type="term" value="P:deoxyribonucleotide catabolic process"/>
    <property type="evidence" value="ECO:0007669"/>
    <property type="project" value="InterPro"/>
</dbReference>
<dbReference type="CDD" id="cd00959">
    <property type="entry name" value="DeoC"/>
    <property type="match status" value="1"/>
</dbReference>
<dbReference type="FunFam" id="3.20.20.70:FF:000034">
    <property type="entry name" value="Deoxyribose-phosphate aldolase"/>
    <property type="match status" value="1"/>
</dbReference>
<dbReference type="Gene3D" id="3.20.20.70">
    <property type="entry name" value="Aldolase class I"/>
    <property type="match status" value="1"/>
</dbReference>
<dbReference type="HAMAP" id="MF_00592">
    <property type="entry name" value="DeoC_type2"/>
    <property type="match status" value="1"/>
</dbReference>
<dbReference type="InterPro" id="IPR013785">
    <property type="entry name" value="Aldolase_TIM"/>
</dbReference>
<dbReference type="InterPro" id="IPR011343">
    <property type="entry name" value="DeoC"/>
</dbReference>
<dbReference type="InterPro" id="IPR002915">
    <property type="entry name" value="DeoC/FbaB/LacD_aldolase"/>
</dbReference>
<dbReference type="InterPro" id="IPR023649">
    <property type="entry name" value="DeoC_typeII"/>
</dbReference>
<dbReference type="NCBIfam" id="TIGR00126">
    <property type="entry name" value="deoC"/>
    <property type="match status" value="1"/>
</dbReference>
<dbReference type="PANTHER" id="PTHR10889">
    <property type="entry name" value="DEOXYRIBOSE-PHOSPHATE ALDOLASE"/>
    <property type="match status" value="1"/>
</dbReference>
<dbReference type="PANTHER" id="PTHR10889:SF3">
    <property type="entry name" value="DEOXYRIBOSE-PHOSPHATE ALDOLASE"/>
    <property type="match status" value="1"/>
</dbReference>
<dbReference type="Pfam" id="PF01791">
    <property type="entry name" value="DeoC"/>
    <property type="match status" value="1"/>
</dbReference>
<dbReference type="PIRSF" id="PIRSF001357">
    <property type="entry name" value="DeoC"/>
    <property type="match status" value="1"/>
</dbReference>
<dbReference type="SMART" id="SM01133">
    <property type="entry name" value="DeoC"/>
    <property type="match status" value="1"/>
</dbReference>
<dbReference type="SUPFAM" id="SSF51569">
    <property type="entry name" value="Aldolase"/>
    <property type="match status" value="1"/>
</dbReference>
<proteinExistence type="inferred from homology"/>
<reference key="1">
    <citation type="journal article" date="2010" name="PLoS Genet.">
        <title>Genome sequence of the plant growth promoting endophytic bacterium Enterobacter sp. 638.</title>
        <authorList>
            <person name="Taghavi S."/>
            <person name="van der Lelie D."/>
            <person name="Hoffman A."/>
            <person name="Zhang Y.B."/>
            <person name="Walla M.D."/>
            <person name="Vangronsveld J."/>
            <person name="Newman L."/>
            <person name="Monchy S."/>
        </authorList>
    </citation>
    <scope>NUCLEOTIDE SEQUENCE [LARGE SCALE GENOMIC DNA]</scope>
    <source>
        <strain>638</strain>
    </source>
</reference>
<keyword id="KW-0963">Cytoplasm</keyword>
<keyword id="KW-0456">Lyase</keyword>
<keyword id="KW-0704">Schiff base</keyword>
<gene>
    <name evidence="1" type="primary">deoC</name>
    <name type="ordered locus">Ent638_0541</name>
</gene>
<accession>A4W698</accession>